<name>SYS_LEGPL</name>
<feature type="chain" id="PRO_0000122069" description="Serine--tRNA ligase">
    <location>
        <begin position="1"/>
        <end position="426"/>
    </location>
</feature>
<feature type="binding site" evidence="1">
    <location>
        <begin position="231"/>
        <end position="233"/>
    </location>
    <ligand>
        <name>L-serine</name>
        <dbReference type="ChEBI" id="CHEBI:33384"/>
    </ligand>
</feature>
<feature type="binding site" evidence="1">
    <location>
        <begin position="262"/>
        <end position="264"/>
    </location>
    <ligand>
        <name>ATP</name>
        <dbReference type="ChEBI" id="CHEBI:30616"/>
    </ligand>
</feature>
<feature type="binding site" evidence="1">
    <location>
        <position position="285"/>
    </location>
    <ligand>
        <name>L-serine</name>
        <dbReference type="ChEBI" id="CHEBI:33384"/>
    </ligand>
</feature>
<feature type="binding site" evidence="1">
    <location>
        <begin position="349"/>
        <end position="352"/>
    </location>
    <ligand>
        <name>ATP</name>
        <dbReference type="ChEBI" id="CHEBI:30616"/>
    </ligand>
</feature>
<feature type="binding site" evidence="1">
    <location>
        <position position="385"/>
    </location>
    <ligand>
        <name>L-serine</name>
        <dbReference type="ChEBI" id="CHEBI:33384"/>
    </ligand>
</feature>
<reference key="1">
    <citation type="journal article" date="2004" name="Nat. Genet.">
        <title>Evidence in the Legionella pneumophila genome for exploitation of host cell functions and high genome plasticity.</title>
        <authorList>
            <person name="Cazalet C."/>
            <person name="Rusniok C."/>
            <person name="Brueggemann H."/>
            <person name="Zidane N."/>
            <person name="Magnier A."/>
            <person name="Ma L."/>
            <person name="Tichit M."/>
            <person name="Jarraud S."/>
            <person name="Bouchier C."/>
            <person name="Vandenesch F."/>
            <person name="Kunst F."/>
            <person name="Etienne J."/>
            <person name="Glaser P."/>
            <person name="Buchrieser C."/>
        </authorList>
    </citation>
    <scope>NUCLEOTIDE SEQUENCE [LARGE SCALE GENOMIC DNA]</scope>
    <source>
        <strain>Lens</strain>
    </source>
</reference>
<accession>Q5WZ31</accession>
<organism>
    <name type="scientific">Legionella pneumophila (strain Lens)</name>
    <dbReference type="NCBI Taxonomy" id="297245"/>
    <lineage>
        <taxon>Bacteria</taxon>
        <taxon>Pseudomonadati</taxon>
        <taxon>Pseudomonadota</taxon>
        <taxon>Gammaproteobacteria</taxon>
        <taxon>Legionellales</taxon>
        <taxon>Legionellaceae</taxon>
        <taxon>Legionella</taxon>
    </lineage>
</organism>
<evidence type="ECO:0000255" key="1">
    <source>
        <dbReference type="HAMAP-Rule" id="MF_00176"/>
    </source>
</evidence>
<proteinExistence type="inferred from homology"/>
<sequence length="426" mass="48181">MLDNQLLRENPQYVATQLLKRGFQFDAVTFSQLEEKRKALQVSTQSLQNERNLRSKAIGEAKSRGENIEPMREEVNKLGAKLEQQKTELDEILKQIEVISLSLPNIPHESVPVGKDELDNQEIRKWGDVPAFSFPVKSHDELGEALGQMDFALAAKITGSRFVVMKGHLARLHRALIQFMLDIHIQQHGYQEIYVPYIVNADSLLGTGQLPKFEADLFKLTGDNGYYLTSTSEIPVTNTVREMILSAEQLPIRYVCHSPCFRSEAGSYGKDTKGMIRQHQFEKVELVWITKPEDSYNALEQLTQHAEVILQRLKLPYRVVALCTGDIGAGSAKTYDLEVWLPSQNTYREISSCSNMEAFQARRMKARFRNPDTNEIQLVHTLNGSGLAVGRTLVAIMENYQDEHGNIHIPDALKPYLGGIDIISVK</sequence>
<gene>
    <name evidence="1" type="primary">serS</name>
    <name type="ordered locus">lpl0551</name>
</gene>
<dbReference type="EC" id="6.1.1.11" evidence="1"/>
<dbReference type="EMBL" id="CR628337">
    <property type="protein sequence ID" value="CAH14781.1"/>
    <property type="molecule type" value="Genomic_DNA"/>
</dbReference>
<dbReference type="RefSeq" id="WP_011214752.1">
    <property type="nucleotide sequence ID" value="NC_006369.1"/>
</dbReference>
<dbReference type="SMR" id="Q5WZ31"/>
<dbReference type="KEGG" id="lpf:lpl0551"/>
<dbReference type="LegioList" id="lpl0551"/>
<dbReference type="HOGENOM" id="CLU_023797_1_1_6"/>
<dbReference type="UniPathway" id="UPA00906">
    <property type="reaction ID" value="UER00895"/>
</dbReference>
<dbReference type="Proteomes" id="UP000002517">
    <property type="component" value="Chromosome"/>
</dbReference>
<dbReference type="GO" id="GO:0005737">
    <property type="term" value="C:cytoplasm"/>
    <property type="evidence" value="ECO:0007669"/>
    <property type="project" value="UniProtKB-SubCell"/>
</dbReference>
<dbReference type="GO" id="GO:0005524">
    <property type="term" value="F:ATP binding"/>
    <property type="evidence" value="ECO:0007669"/>
    <property type="project" value="UniProtKB-UniRule"/>
</dbReference>
<dbReference type="GO" id="GO:0004828">
    <property type="term" value="F:serine-tRNA ligase activity"/>
    <property type="evidence" value="ECO:0007669"/>
    <property type="project" value="UniProtKB-UniRule"/>
</dbReference>
<dbReference type="GO" id="GO:0016260">
    <property type="term" value="P:selenocysteine biosynthetic process"/>
    <property type="evidence" value="ECO:0007669"/>
    <property type="project" value="UniProtKB-UniRule"/>
</dbReference>
<dbReference type="GO" id="GO:0006434">
    <property type="term" value="P:seryl-tRNA aminoacylation"/>
    <property type="evidence" value="ECO:0007669"/>
    <property type="project" value="UniProtKB-UniRule"/>
</dbReference>
<dbReference type="CDD" id="cd00770">
    <property type="entry name" value="SerRS_core"/>
    <property type="match status" value="1"/>
</dbReference>
<dbReference type="Gene3D" id="3.30.930.10">
    <property type="entry name" value="Bira Bifunctional Protein, Domain 2"/>
    <property type="match status" value="1"/>
</dbReference>
<dbReference type="Gene3D" id="1.10.287.40">
    <property type="entry name" value="Serine-tRNA synthetase, tRNA binding domain"/>
    <property type="match status" value="1"/>
</dbReference>
<dbReference type="HAMAP" id="MF_00176">
    <property type="entry name" value="Ser_tRNA_synth_type1"/>
    <property type="match status" value="1"/>
</dbReference>
<dbReference type="InterPro" id="IPR002314">
    <property type="entry name" value="aa-tRNA-synt_IIb"/>
</dbReference>
<dbReference type="InterPro" id="IPR006195">
    <property type="entry name" value="aa-tRNA-synth_II"/>
</dbReference>
<dbReference type="InterPro" id="IPR045864">
    <property type="entry name" value="aa-tRNA-synth_II/BPL/LPL"/>
</dbReference>
<dbReference type="InterPro" id="IPR002317">
    <property type="entry name" value="Ser-tRNA-ligase_type_1"/>
</dbReference>
<dbReference type="InterPro" id="IPR015866">
    <property type="entry name" value="Ser-tRNA-synth_1_N"/>
</dbReference>
<dbReference type="InterPro" id="IPR042103">
    <property type="entry name" value="SerRS_1_N_sf"/>
</dbReference>
<dbReference type="InterPro" id="IPR033729">
    <property type="entry name" value="SerRS_core"/>
</dbReference>
<dbReference type="InterPro" id="IPR010978">
    <property type="entry name" value="tRNA-bd_arm"/>
</dbReference>
<dbReference type="NCBIfam" id="TIGR00414">
    <property type="entry name" value="serS"/>
    <property type="match status" value="1"/>
</dbReference>
<dbReference type="PANTHER" id="PTHR43697:SF1">
    <property type="entry name" value="SERINE--TRNA LIGASE"/>
    <property type="match status" value="1"/>
</dbReference>
<dbReference type="PANTHER" id="PTHR43697">
    <property type="entry name" value="SERYL-TRNA SYNTHETASE"/>
    <property type="match status" value="1"/>
</dbReference>
<dbReference type="Pfam" id="PF02403">
    <property type="entry name" value="Seryl_tRNA_N"/>
    <property type="match status" value="1"/>
</dbReference>
<dbReference type="Pfam" id="PF00587">
    <property type="entry name" value="tRNA-synt_2b"/>
    <property type="match status" value="1"/>
</dbReference>
<dbReference type="PIRSF" id="PIRSF001529">
    <property type="entry name" value="Ser-tRNA-synth_IIa"/>
    <property type="match status" value="1"/>
</dbReference>
<dbReference type="PRINTS" id="PR00981">
    <property type="entry name" value="TRNASYNTHSER"/>
</dbReference>
<dbReference type="SUPFAM" id="SSF55681">
    <property type="entry name" value="Class II aaRS and biotin synthetases"/>
    <property type="match status" value="1"/>
</dbReference>
<dbReference type="SUPFAM" id="SSF46589">
    <property type="entry name" value="tRNA-binding arm"/>
    <property type="match status" value="1"/>
</dbReference>
<dbReference type="PROSITE" id="PS50862">
    <property type="entry name" value="AA_TRNA_LIGASE_II"/>
    <property type="match status" value="1"/>
</dbReference>
<keyword id="KW-0030">Aminoacyl-tRNA synthetase</keyword>
<keyword id="KW-0067">ATP-binding</keyword>
<keyword id="KW-0963">Cytoplasm</keyword>
<keyword id="KW-0436">Ligase</keyword>
<keyword id="KW-0547">Nucleotide-binding</keyword>
<keyword id="KW-0648">Protein biosynthesis</keyword>
<protein>
    <recommendedName>
        <fullName evidence="1">Serine--tRNA ligase</fullName>
        <ecNumber evidence="1">6.1.1.11</ecNumber>
    </recommendedName>
    <alternativeName>
        <fullName evidence="1">Seryl-tRNA synthetase</fullName>
        <shortName evidence="1">SerRS</shortName>
    </alternativeName>
    <alternativeName>
        <fullName evidence="1">Seryl-tRNA(Ser/Sec) synthetase</fullName>
    </alternativeName>
</protein>
<comment type="function">
    <text evidence="1">Catalyzes the attachment of serine to tRNA(Ser). Is also able to aminoacylate tRNA(Sec) with serine, to form the misacylated tRNA L-seryl-tRNA(Sec), which will be further converted into selenocysteinyl-tRNA(Sec).</text>
</comment>
<comment type="catalytic activity">
    <reaction evidence="1">
        <text>tRNA(Ser) + L-serine + ATP = L-seryl-tRNA(Ser) + AMP + diphosphate + H(+)</text>
        <dbReference type="Rhea" id="RHEA:12292"/>
        <dbReference type="Rhea" id="RHEA-COMP:9669"/>
        <dbReference type="Rhea" id="RHEA-COMP:9703"/>
        <dbReference type="ChEBI" id="CHEBI:15378"/>
        <dbReference type="ChEBI" id="CHEBI:30616"/>
        <dbReference type="ChEBI" id="CHEBI:33019"/>
        <dbReference type="ChEBI" id="CHEBI:33384"/>
        <dbReference type="ChEBI" id="CHEBI:78442"/>
        <dbReference type="ChEBI" id="CHEBI:78533"/>
        <dbReference type="ChEBI" id="CHEBI:456215"/>
        <dbReference type="EC" id="6.1.1.11"/>
    </reaction>
</comment>
<comment type="catalytic activity">
    <reaction evidence="1">
        <text>tRNA(Sec) + L-serine + ATP = L-seryl-tRNA(Sec) + AMP + diphosphate + H(+)</text>
        <dbReference type="Rhea" id="RHEA:42580"/>
        <dbReference type="Rhea" id="RHEA-COMP:9742"/>
        <dbReference type="Rhea" id="RHEA-COMP:10128"/>
        <dbReference type="ChEBI" id="CHEBI:15378"/>
        <dbReference type="ChEBI" id="CHEBI:30616"/>
        <dbReference type="ChEBI" id="CHEBI:33019"/>
        <dbReference type="ChEBI" id="CHEBI:33384"/>
        <dbReference type="ChEBI" id="CHEBI:78442"/>
        <dbReference type="ChEBI" id="CHEBI:78533"/>
        <dbReference type="ChEBI" id="CHEBI:456215"/>
        <dbReference type="EC" id="6.1.1.11"/>
    </reaction>
</comment>
<comment type="pathway">
    <text evidence="1">Aminoacyl-tRNA biosynthesis; selenocysteinyl-tRNA(Sec) biosynthesis; L-seryl-tRNA(Sec) from L-serine and tRNA(Sec): step 1/1.</text>
</comment>
<comment type="subunit">
    <text evidence="1">Homodimer. The tRNA molecule binds across the dimer.</text>
</comment>
<comment type="subcellular location">
    <subcellularLocation>
        <location evidence="1">Cytoplasm</location>
    </subcellularLocation>
</comment>
<comment type="domain">
    <text evidence="1">Consists of two distinct domains, a catalytic core and a N-terminal extension that is involved in tRNA binding.</text>
</comment>
<comment type="similarity">
    <text evidence="1">Belongs to the class-II aminoacyl-tRNA synthetase family. Type-1 seryl-tRNA synthetase subfamily.</text>
</comment>